<dbReference type="EMBL" id="CP000050">
    <property type="protein sequence ID" value="AAY50743.1"/>
    <property type="molecule type" value="Genomic_DNA"/>
</dbReference>
<dbReference type="RefSeq" id="WP_011038715.1">
    <property type="nucleotide sequence ID" value="NZ_CP155948.1"/>
</dbReference>
<dbReference type="PDB" id="5B7W">
    <property type="method" value="X-ray"/>
    <property type="resolution" value="2.08 A"/>
    <property type="chains" value="A/B=1-161"/>
</dbReference>
<dbReference type="PDBsum" id="5B7W"/>
<dbReference type="SMR" id="Q4UQD0"/>
<dbReference type="KEGG" id="xcb:XC_3703"/>
<dbReference type="HOGENOM" id="CLU_099839_1_0_6"/>
<dbReference type="PHI-base" id="PHI:3259"/>
<dbReference type="Proteomes" id="UP000000420">
    <property type="component" value="Chromosome"/>
</dbReference>
<dbReference type="GO" id="GO:0005829">
    <property type="term" value="C:cytosol"/>
    <property type="evidence" value="ECO:0007669"/>
    <property type="project" value="TreeGrafter"/>
</dbReference>
<dbReference type="GO" id="GO:0000166">
    <property type="term" value="F:nucleotide binding"/>
    <property type="evidence" value="ECO:0007669"/>
    <property type="project" value="TreeGrafter"/>
</dbReference>
<dbReference type="CDD" id="cd11740">
    <property type="entry name" value="YajQ_like"/>
    <property type="match status" value="1"/>
</dbReference>
<dbReference type="FunFam" id="3.30.70.990:FF:000001">
    <property type="entry name" value="UPF0234 protein YajQ"/>
    <property type="match status" value="1"/>
</dbReference>
<dbReference type="Gene3D" id="3.30.70.860">
    <property type="match status" value="1"/>
</dbReference>
<dbReference type="Gene3D" id="3.30.70.990">
    <property type="entry name" value="YajQ-like, domain 2"/>
    <property type="match status" value="1"/>
</dbReference>
<dbReference type="HAMAP" id="MF_00632">
    <property type="entry name" value="YajQ"/>
    <property type="match status" value="1"/>
</dbReference>
<dbReference type="InterPro" id="IPR007551">
    <property type="entry name" value="DUF520"/>
</dbReference>
<dbReference type="InterPro" id="IPR035571">
    <property type="entry name" value="UPF0234-like_C"/>
</dbReference>
<dbReference type="InterPro" id="IPR035570">
    <property type="entry name" value="UPF0234_N"/>
</dbReference>
<dbReference type="InterPro" id="IPR036183">
    <property type="entry name" value="YajQ-like_sf"/>
</dbReference>
<dbReference type="NCBIfam" id="NF003819">
    <property type="entry name" value="PRK05412.1"/>
    <property type="match status" value="1"/>
</dbReference>
<dbReference type="PANTHER" id="PTHR30476">
    <property type="entry name" value="UPF0234 PROTEIN YAJQ"/>
    <property type="match status" value="1"/>
</dbReference>
<dbReference type="PANTHER" id="PTHR30476:SF0">
    <property type="entry name" value="UPF0234 PROTEIN YAJQ"/>
    <property type="match status" value="1"/>
</dbReference>
<dbReference type="Pfam" id="PF04461">
    <property type="entry name" value="DUF520"/>
    <property type="match status" value="1"/>
</dbReference>
<dbReference type="SUPFAM" id="SSF89963">
    <property type="entry name" value="YajQ-like"/>
    <property type="match status" value="2"/>
</dbReference>
<accession>Q4UQD0</accession>
<organism>
    <name type="scientific">Xanthomonas campestris pv. campestris (strain 8004)</name>
    <dbReference type="NCBI Taxonomy" id="314565"/>
    <lineage>
        <taxon>Bacteria</taxon>
        <taxon>Pseudomonadati</taxon>
        <taxon>Pseudomonadota</taxon>
        <taxon>Gammaproteobacteria</taxon>
        <taxon>Lysobacterales</taxon>
        <taxon>Lysobacteraceae</taxon>
        <taxon>Xanthomonas</taxon>
    </lineage>
</organism>
<proteinExistence type="evidence at protein level"/>
<reference evidence="7" key="1">
    <citation type="journal article" date="2005" name="Genome Res.">
        <title>Comparative and functional genomic analyses of the pathogenicity of phytopathogen Xanthomonas campestris pv. campestris.</title>
        <authorList>
            <person name="Qian W."/>
            <person name="Jia Y."/>
            <person name="Ren S.-X."/>
            <person name="He Y.-Q."/>
            <person name="Feng J.-X."/>
            <person name="Lu L.-F."/>
            <person name="Sun Q."/>
            <person name="Ying G."/>
            <person name="Tang D.-J."/>
            <person name="Tang H."/>
            <person name="Wu W."/>
            <person name="Hao P."/>
            <person name="Wang L."/>
            <person name="Jiang B.-L."/>
            <person name="Zeng S."/>
            <person name="Gu W.-Y."/>
            <person name="Lu G."/>
            <person name="Rong L."/>
            <person name="Tian Y."/>
            <person name="Yao Z."/>
            <person name="Fu G."/>
            <person name="Chen B."/>
            <person name="Fang R."/>
            <person name="Qiang B."/>
            <person name="Chen Z."/>
            <person name="Zhao G.-P."/>
            <person name="Tang J.-L."/>
            <person name="He C."/>
        </authorList>
    </citation>
    <scope>NUCLEOTIDE SEQUENCE [LARGE SCALE GENOMIC DNA]</scope>
    <source>
        <strain>8004</strain>
    </source>
</reference>
<reference key="2">
    <citation type="journal article" date="2014" name="PLoS Pathog.">
        <title>Novel cyclic di-GMP effectors of the YajQ protein family control bacterial virulence.</title>
        <authorList>
            <person name="An S.Q."/>
            <person name="Caly D.L."/>
            <person name="McCarthy Y."/>
            <person name="Murdoch S.L."/>
            <person name="Ward J."/>
            <person name="Febrer M."/>
            <person name="Dow J.M."/>
            <person name="Ryan R.P."/>
        </authorList>
    </citation>
    <scope>FUNCTION</scope>
    <scope>ACTIVITY REGULATION</scope>
    <scope>INTERACTION WITH XC_2801</scope>
    <scope>DISRUPTION PHENOTYPE</scope>
    <source>
        <strain>8004</strain>
    </source>
</reference>
<reference evidence="8" key="3">
    <citation type="journal article" date="2016" name="Acta Crystallogr. F Struct. Biol. Commun.">
        <title>Crystal structure of the YajQ-family protein XC_3703 from Xanthomonas campestris pv. campestris.</title>
        <authorList>
            <person name="Zhao Z."/>
            <person name="Wu Z."/>
            <person name="Zhang J."/>
        </authorList>
    </citation>
    <scope>X-RAY CRYSTALLOGRAPHY (2.08 ANGSTROMS)</scope>
    <scope>DOMAIN</scope>
    <source>
        <strain>8004</strain>
    </source>
</reference>
<name>Y3703_XANC8</name>
<sequence>MPSFDVISEVDKHELTNAVDQANRELDTRFDFKGVEAKFELEDGKVINQSAPSDFQVKQMTDILRARLLARGIDVRCLEFGDVETNLAGARQKVTVKQGIEQKQAKQLVAKLKEAKLKVEAQINGDKLRVTGKKRDDLQDAIAVLKKADFELPLQFDNFRD</sequence>
<keyword id="KW-0002">3D-structure</keyword>
<keyword id="KW-0547">Nucleotide-binding</keyword>
<keyword id="KW-0843">Virulence</keyword>
<protein>
    <recommendedName>
        <fullName evidence="5">Cyclic di-GMP-binding protein XC_3703</fullName>
    </recommendedName>
</protein>
<evidence type="ECO:0000250" key="1">
    <source>
        <dbReference type="UniProtKB" id="Q8ZRC9"/>
    </source>
</evidence>
<evidence type="ECO:0000255" key="2">
    <source>
        <dbReference type="HAMAP-Rule" id="MF_00632"/>
    </source>
</evidence>
<evidence type="ECO:0000269" key="3">
    <source>
    </source>
</evidence>
<evidence type="ECO:0000269" key="4">
    <source>
    </source>
</evidence>
<evidence type="ECO:0000305" key="5"/>
<evidence type="ECO:0000305" key="6">
    <source>
    </source>
</evidence>
<evidence type="ECO:0000312" key="7">
    <source>
        <dbReference type="EMBL" id="AAY50743.1"/>
    </source>
</evidence>
<evidence type="ECO:0007744" key="8">
    <source>
        <dbReference type="PDB" id="5B7W"/>
    </source>
</evidence>
<evidence type="ECO:0007829" key="9">
    <source>
        <dbReference type="PDB" id="5B7W"/>
    </source>
</evidence>
<comment type="function">
    <text evidence="3">Cyclic di-GMP effector that regulates bacterial virulence and biofilm formation (PubMed:25329577). Binds bis-(3',5')-cyclic diguanylate (cyclic di-GMP or c-di-GMP), an important bacterial second messenger that controls a wide range of cellular processes (PubMed:25329577). In the absence of cyclic di-GMP, XC_3703 positively affects the binding of the transcriptional regulator XC_2801 to its target genes and influences their transcription (PubMed:25329577). The binding of cyclic di-GMP to XC_3703 inhibits the interaction of the XC_2801-XC_3703 complex with DNA, thus preventing the transcription of the target genes (PubMed:25329577). Probably also exerts additional regulatory effects, independently of XC_2801, that contribute to bacterial virulence (PubMed:25329577). Binds cyclic di-GMP with a high affinity (PubMed:25329577). Shows a much lower affinity for binding of ATP, GTP and cyclic di-AMP and no detectable binding of cyclic GMP or cyclic AMP (PubMed:25329577).</text>
</comment>
<comment type="activity regulation">
    <text evidence="3">Activity is regulated by cyclic di-GMP (PubMed:25329577). Cyclic di-GMP specifically binds to XC_3703, which inhibits the interaction of the XC_2801-XC_3703 complex with DNA and prevents the transcription of the target genes (PubMed:25329577).</text>
</comment>
<comment type="subunit">
    <text evidence="3">Interacts with the LysR-type transcriptional regulator XC_2801.</text>
</comment>
<comment type="domain">
    <text evidence="4">Consists of two domains (domain I and domain II) adopting the same topology, which is similar to that of the RNA-recognition motif (RRM) (PubMed:27599864). Domain I is composed of the first N-terminal beta-strand and residues 101 to the C-terminus, and domain II includes residues 11-100 (PubMed:27599864). Each domain contains a four-stranded antiparallel beta-sheet packed by two helices from one side (PubMed:27599864).</text>
</comment>
<comment type="disruption phenotype">
    <text evidence="3">The deletion mutant shows reduced virulence to plants and alteration in biofilm formation (PubMed:25329577). Deletion of the gene also leads to alteration in levels of transcript of a number of genes associated with a large range of biological functions (PubMed:25329577).</text>
</comment>
<comment type="similarity">
    <text evidence="2 6">Belongs to the YajQ family.</text>
</comment>
<feature type="chain" id="PRO_0000261988" description="Cyclic di-GMP-binding protein XC_3703">
    <location>
        <begin position="1"/>
        <end position="161"/>
    </location>
</feature>
<feature type="binding site" evidence="1">
    <location>
        <position position="33"/>
    </location>
    <ligand>
        <name>3',3'-c-di-GMP</name>
        <dbReference type="ChEBI" id="CHEBI:58805"/>
        <label>1</label>
    </ligand>
</feature>
<feature type="binding site" evidence="1">
    <location>
        <position position="133"/>
    </location>
    <ligand>
        <name>3',3'-c-di-GMP</name>
        <dbReference type="ChEBI" id="CHEBI:58805"/>
        <label>2</label>
    </ligand>
</feature>
<feature type="binding site" evidence="1">
    <location>
        <position position="135"/>
    </location>
    <ligand>
        <name>3',3'-c-di-GMP</name>
        <dbReference type="ChEBI" id="CHEBI:58805"/>
        <label>2</label>
    </ligand>
</feature>
<feature type="binding site" evidence="1">
    <location>
        <position position="136"/>
    </location>
    <ligand>
        <name>3',3'-c-di-GMP</name>
        <dbReference type="ChEBI" id="CHEBI:58805"/>
        <label>2</label>
    </ligand>
</feature>
<feature type="binding site" evidence="1">
    <location>
        <position position="161"/>
    </location>
    <ligand>
        <name>3',3'-c-di-GMP</name>
        <dbReference type="ChEBI" id="CHEBI:58805"/>
        <label>2</label>
    </ligand>
</feature>
<feature type="strand" evidence="9">
    <location>
        <begin position="3"/>
        <end position="7"/>
    </location>
</feature>
<feature type="helix" evidence="9">
    <location>
        <begin position="12"/>
        <end position="26"/>
    </location>
</feature>
<feature type="helix" evidence="9">
    <location>
        <begin position="30"/>
        <end position="32"/>
    </location>
</feature>
<feature type="strand" evidence="9">
    <location>
        <begin position="38"/>
        <end position="42"/>
    </location>
</feature>
<feature type="turn" evidence="9">
    <location>
        <begin position="43"/>
        <end position="45"/>
    </location>
</feature>
<feature type="strand" evidence="9">
    <location>
        <begin position="46"/>
        <end position="53"/>
    </location>
</feature>
<feature type="helix" evidence="9">
    <location>
        <begin position="54"/>
        <end position="70"/>
    </location>
</feature>
<feature type="helix" evidence="9">
    <location>
        <begin position="75"/>
        <end position="77"/>
    </location>
</feature>
<feature type="strand" evidence="9">
    <location>
        <begin position="78"/>
        <end position="80"/>
    </location>
</feature>
<feature type="strand" evidence="9">
    <location>
        <begin position="90"/>
        <end position="96"/>
    </location>
</feature>
<feature type="helix" evidence="9">
    <location>
        <begin position="102"/>
        <end position="114"/>
    </location>
</feature>
<feature type="strand" evidence="9">
    <location>
        <begin position="118"/>
        <end position="124"/>
    </location>
</feature>
<feature type="strand" evidence="9">
    <location>
        <begin position="127"/>
        <end position="134"/>
    </location>
</feature>
<feature type="helix" evidence="9">
    <location>
        <begin position="135"/>
        <end position="146"/>
    </location>
</feature>
<feature type="strand" evidence="9">
    <location>
        <begin position="155"/>
        <end position="160"/>
    </location>
</feature>
<gene>
    <name type="ordered locus">XC_3703</name>
</gene>